<keyword id="KW-0030">Aminoacyl-tRNA synthetase</keyword>
<keyword id="KW-0067">ATP-binding</keyword>
<keyword id="KW-0963">Cytoplasm</keyword>
<keyword id="KW-0436">Ligase</keyword>
<keyword id="KW-0479">Metal-binding</keyword>
<keyword id="KW-0547">Nucleotide-binding</keyword>
<keyword id="KW-0648">Protein biosynthesis</keyword>
<keyword id="KW-0862">Zinc</keyword>
<comment type="catalytic activity">
    <reaction evidence="1">
        <text>tRNA(Cys) + L-cysteine + ATP = L-cysteinyl-tRNA(Cys) + AMP + diphosphate</text>
        <dbReference type="Rhea" id="RHEA:17773"/>
        <dbReference type="Rhea" id="RHEA-COMP:9661"/>
        <dbReference type="Rhea" id="RHEA-COMP:9679"/>
        <dbReference type="ChEBI" id="CHEBI:30616"/>
        <dbReference type="ChEBI" id="CHEBI:33019"/>
        <dbReference type="ChEBI" id="CHEBI:35235"/>
        <dbReference type="ChEBI" id="CHEBI:78442"/>
        <dbReference type="ChEBI" id="CHEBI:78517"/>
        <dbReference type="ChEBI" id="CHEBI:456215"/>
        <dbReference type="EC" id="6.1.1.16"/>
    </reaction>
</comment>
<comment type="cofactor">
    <cofactor evidence="1">
        <name>Zn(2+)</name>
        <dbReference type="ChEBI" id="CHEBI:29105"/>
    </cofactor>
    <text evidence="1">Binds 1 zinc ion per subunit.</text>
</comment>
<comment type="subunit">
    <text evidence="1">Monomer.</text>
</comment>
<comment type="subcellular location">
    <subcellularLocation>
        <location evidence="1">Cytoplasm</location>
    </subcellularLocation>
</comment>
<comment type="similarity">
    <text evidence="1">Belongs to the class-I aminoacyl-tRNA synthetase family.</text>
</comment>
<accession>A5FHM5</accession>
<name>SYC_FLAJ1</name>
<gene>
    <name evidence="1" type="primary">cysS</name>
    <name type="ordered locus">Fjoh_2268</name>
</gene>
<feature type="chain" id="PRO_0000332824" description="Cysteine--tRNA ligase">
    <location>
        <begin position="1"/>
        <end position="492"/>
    </location>
</feature>
<feature type="short sequence motif" description="'HIGH' region">
    <location>
        <begin position="37"/>
        <end position="47"/>
    </location>
</feature>
<feature type="short sequence motif" description="'KMSKS' region">
    <location>
        <begin position="287"/>
        <end position="291"/>
    </location>
</feature>
<feature type="binding site" evidence="1">
    <location>
        <position position="35"/>
    </location>
    <ligand>
        <name>Zn(2+)</name>
        <dbReference type="ChEBI" id="CHEBI:29105"/>
    </ligand>
</feature>
<feature type="binding site" evidence="1">
    <location>
        <position position="230"/>
    </location>
    <ligand>
        <name>Zn(2+)</name>
        <dbReference type="ChEBI" id="CHEBI:29105"/>
    </ligand>
</feature>
<feature type="binding site" evidence="1">
    <location>
        <position position="255"/>
    </location>
    <ligand>
        <name>Zn(2+)</name>
        <dbReference type="ChEBI" id="CHEBI:29105"/>
    </ligand>
</feature>
<feature type="binding site" evidence="1">
    <location>
        <position position="259"/>
    </location>
    <ligand>
        <name>Zn(2+)</name>
        <dbReference type="ChEBI" id="CHEBI:29105"/>
    </ligand>
</feature>
<feature type="binding site" evidence="1">
    <location>
        <position position="290"/>
    </location>
    <ligand>
        <name>ATP</name>
        <dbReference type="ChEBI" id="CHEBI:30616"/>
    </ligand>
</feature>
<protein>
    <recommendedName>
        <fullName evidence="1">Cysteine--tRNA ligase</fullName>
        <ecNumber evidence="1">6.1.1.16</ecNumber>
    </recommendedName>
    <alternativeName>
        <fullName evidence="1">Cysteinyl-tRNA synthetase</fullName>
        <shortName evidence="1">CysRS</shortName>
    </alternativeName>
</protein>
<dbReference type="EC" id="6.1.1.16" evidence="1"/>
<dbReference type="EMBL" id="CP000685">
    <property type="protein sequence ID" value="ABQ05295.1"/>
    <property type="molecule type" value="Genomic_DNA"/>
</dbReference>
<dbReference type="RefSeq" id="WP_012024334.1">
    <property type="nucleotide sequence ID" value="NC_009441.1"/>
</dbReference>
<dbReference type="SMR" id="A5FHM5"/>
<dbReference type="STRING" id="376686.Fjoh_2268"/>
<dbReference type="KEGG" id="fjo:Fjoh_2268"/>
<dbReference type="eggNOG" id="COG0215">
    <property type="taxonomic scope" value="Bacteria"/>
</dbReference>
<dbReference type="HOGENOM" id="CLU_013528_0_1_10"/>
<dbReference type="OrthoDB" id="9815130at2"/>
<dbReference type="Proteomes" id="UP000006694">
    <property type="component" value="Chromosome"/>
</dbReference>
<dbReference type="GO" id="GO:0005829">
    <property type="term" value="C:cytosol"/>
    <property type="evidence" value="ECO:0007669"/>
    <property type="project" value="TreeGrafter"/>
</dbReference>
<dbReference type="GO" id="GO:0005524">
    <property type="term" value="F:ATP binding"/>
    <property type="evidence" value="ECO:0007669"/>
    <property type="project" value="UniProtKB-UniRule"/>
</dbReference>
<dbReference type="GO" id="GO:0004817">
    <property type="term" value="F:cysteine-tRNA ligase activity"/>
    <property type="evidence" value="ECO:0007669"/>
    <property type="project" value="UniProtKB-UniRule"/>
</dbReference>
<dbReference type="GO" id="GO:0008270">
    <property type="term" value="F:zinc ion binding"/>
    <property type="evidence" value="ECO:0007669"/>
    <property type="project" value="UniProtKB-UniRule"/>
</dbReference>
<dbReference type="GO" id="GO:0006423">
    <property type="term" value="P:cysteinyl-tRNA aminoacylation"/>
    <property type="evidence" value="ECO:0007669"/>
    <property type="project" value="UniProtKB-UniRule"/>
</dbReference>
<dbReference type="CDD" id="cd00672">
    <property type="entry name" value="CysRS_core"/>
    <property type="match status" value="1"/>
</dbReference>
<dbReference type="Gene3D" id="1.20.120.1910">
    <property type="entry name" value="Cysteine-tRNA ligase, C-terminal anti-codon recognition domain"/>
    <property type="match status" value="1"/>
</dbReference>
<dbReference type="Gene3D" id="3.40.50.620">
    <property type="entry name" value="HUPs"/>
    <property type="match status" value="1"/>
</dbReference>
<dbReference type="HAMAP" id="MF_00041">
    <property type="entry name" value="Cys_tRNA_synth"/>
    <property type="match status" value="1"/>
</dbReference>
<dbReference type="InterPro" id="IPR015803">
    <property type="entry name" value="Cys-tRNA-ligase"/>
</dbReference>
<dbReference type="InterPro" id="IPR015273">
    <property type="entry name" value="Cys-tRNA-synt_Ia_DALR"/>
</dbReference>
<dbReference type="InterPro" id="IPR024909">
    <property type="entry name" value="Cys-tRNA/MSH_ligase"/>
</dbReference>
<dbReference type="InterPro" id="IPR014729">
    <property type="entry name" value="Rossmann-like_a/b/a_fold"/>
</dbReference>
<dbReference type="InterPro" id="IPR032678">
    <property type="entry name" value="tRNA-synt_1_cat_dom"/>
</dbReference>
<dbReference type="InterPro" id="IPR009080">
    <property type="entry name" value="tRNAsynth_Ia_anticodon-bd"/>
</dbReference>
<dbReference type="NCBIfam" id="TIGR00435">
    <property type="entry name" value="cysS"/>
    <property type="match status" value="1"/>
</dbReference>
<dbReference type="PANTHER" id="PTHR10890:SF3">
    <property type="entry name" value="CYSTEINE--TRNA LIGASE, CYTOPLASMIC"/>
    <property type="match status" value="1"/>
</dbReference>
<dbReference type="PANTHER" id="PTHR10890">
    <property type="entry name" value="CYSTEINYL-TRNA SYNTHETASE"/>
    <property type="match status" value="1"/>
</dbReference>
<dbReference type="Pfam" id="PF09190">
    <property type="entry name" value="DALR_2"/>
    <property type="match status" value="1"/>
</dbReference>
<dbReference type="Pfam" id="PF01406">
    <property type="entry name" value="tRNA-synt_1e"/>
    <property type="match status" value="1"/>
</dbReference>
<dbReference type="PRINTS" id="PR00983">
    <property type="entry name" value="TRNASYNTHCYS"/>
</dbReference>
<dbReference type="SMART" id="SM00840">
    <property type="entry name" value="DALR_2"/>
    <property type="match status" value="1"/>
</dbReference>
<dbReference type="SUPFAM" id="SSF47323">
    <property type="entry name" value="Anticodon-binding domain of a subclass of class I aminoacyl-tRNA synthetases"/>
    <property type="match status" value="1"/>
</dbReference>
<dbReference type="SUPFAM" id="SSF52374">
    <property type="entry name" value="Nucleotidylyl transferase"/>
    <property type="match status" value="1"/>
</dbReference>
<reference key="1">
    <citation type="journal article" date="2009" name="Appl. Environ. Microbiol.">
        <title>Novel features of the polysaccharide-digesting gliding bacterium Flavobacterium johnsoniae as revealed by genome sequence analysis.</title>
        <authorList>
            <person name="McBride M.J."/>
            <person name="Xie G."/>
            <person name="Martens E.C."/>
            <person name="Lapidus A."/>
            <person name="Henrissat B."/>
            <person name="Rhodes R.G."/>
            <person name="Goltsman E."/>
            <person name="Wang W."/>
            <person name="Xu J."/>
            <person name="Hunnicutt D.W."/>
            <person name="Staroscik A.M."/>
            <person name="Hoover T.R."/>
            <person name="Cheng Y.Q."/>
            <person name="Stein J.L."/>
        </authorList>
    </citation>
    <scope>NUCLEOTIDE SEQUENCE [LARGE SCALE GENOMIC DNA]</scope>
    <source>
        <strain>ATCC 17061 / DSM 2064 / JCM 8514 / BCRC 14874 / CCUG 350202 / NBRC 14942 / NCIMB 11054 / UW101</strain>
    </source>
</reference>
<proteinExistence type="inferred from homology"/>
<evidence type="ECO:0000255" key="1">
    <source>
        <dbReference type="HAMAP-Rule" id="MF_00041"/>
    </source>
</evidence>
<organism>
    <name type="scientific">Flavobacterium johnsoniae (strain ATCC 17061 / DSM 2064 / JCM 8514 / BCRC 14874 / CCUG 350202 / NBRC 14942 / NCIMB 11054 / UW101)</name>
    <name type="common">Cytophaga johnsonae</name>
    <dbReference type="NCBI Taxonomy" id="376686"/>
    <lineage>
        <taxon>Bacteria</taxon>
        <taxon>Pseudomonadati</taxon>
        <taxon>Bacteroidota</taxon>
        <taxon>Flavobacteriia</taxon>
        <taxon>Flavobacteriales</taxon>
        <taxon>Flavobacteriaceae</taxon>
        <taxon>Flavobacterium</taxon>
    </lineage>
</organism>
<sequence length="492" mass="55212">MPLYSSQPLKIYNSLSGEKENFKPIHEGNVGMYVCGPTVYSNVHLGNVRTFMSFDVIFRYFLHLDYKVRYVRNITDVGHIVDDVDEGEDKIAKKARLEQLEPMEVVQRYTVDFHDILKAFNFLPPSIEPTATGHIIEQIEIIKKIIDTGIGYEANGSVYFDVVKYNETNNYGVLSGRNIEDMLANTRDLDGQSDKRNPQDFALWKKAEPEHIMRWPSPWSDGFPGWHLECTAMSTKYLGNHFDIHGGGMDLKFPHHECEIAQNEACTGQSPVNYWMHTNMLTLNGKKMAKSTGNNILPGEILSGDNTILSKAFSASVTRFFMLQAHYRSILDFSDDAITAAEKGYKRLMEALEALPAIKAGSSSSVDFAAWKQACYDAMNDDFNTPILIAQLFEAVRYINLLKEGKETISAEDLKSFSTAINAFVFDVLGLSDEKAADGNNDKLEGVVNMLIGMRNQARADKNFALSDQIRDQLIALGIQLKDGKEGTSFSI</sequence>